<keyword id="KW-1185">Reference proteome</keyword>
<keyword id="KW-0687">Ribonucleoprotein</keyword>
<keyword id="KW-0689">Ribosomal protein</keyword>
<keyword id="KW-0694">RNA-binding</keyword>
<keyword id="KW-0699">rRNA-binding</keyword>
<feature type="chain" id="PRO_1000051857" description="Small ribosomal subunit protein uS11">
    <location>
        <begin position="1"/>
        <end position="129"/>
    </location>
</feature>
<organism>
    <name type="scientific">Rhizorhabdus wittichii (strain DSM 6014 / CCUG 31198 / JCM 15750 / NBRC 105917 / EY 4224 / RW1)</name>
    <name type="common">Sphingomonas wittichii</name>
    <dbReference type="NCBI Taxonomy" id="392499"/>
    <lineage>
        <taxon>Bacteria</taxon>
        <taxon>Pseudomonadati</taxon>
        <taxon>Pseudomonadota</taxon>
        <taxon>Alphaproteobacteria</taxon>
        <taxon>Sphingomonadales</taxon>
        <taxon>Sphingomonadaceae</taxon>
        <taxon>Rhizorhabdus</taxon>
    </lineage>
</organism>
<comment type="function">
    <text evidence="1">Located on the platform of the 30S subunit, it bridges several disparate RNA helices of the 16S rRNA. Forms part of the Shine-Dalgarno cleft in the 70S ribosome.</text>
</comment>
<comment type="subunit">
    <text evidence="1">Part of the 30S ribosomal subunit. Interacts with proteins S7 and S18. Binds to IF-3.</text>
</comment>
<comment type="similarity">
    <text evidence="1">Belongs to the universal ribosomal protein uS11 family.</text>
</comment>
<proteinExistence type="inferred from homology"/>
<evidence type="ECO:0000255" key="1">
    <source>
        <dbReference type="HAMAP-Rule" id="MF_01310"/>
    </source>
</evidence>
<evidence type="ECO:0000305" key="2"/>
<name>RS11_RHIWR</name>
<gene>
    <name evidence="1" type="primary">rpsK</name>
    <name type="ordered locus">Swit_1327</name>
</gene>
<reference key="1">
    <citation type="journal article" date="2010" name="J. Bacteriol.">
        <title>Genome sequence of the dioxin-mineralizing bacterium Sphingomonas wittichii RW1.</title>
        <authorList>
            <person name="Miller T.R."/>
            <person name="Delcher A.L."/>
            <person name="Salzberg S.L."/>
            <person name="Saunders E."/>
            <person name="Detter J.C."/>
            <person name="Halden R.U."/>
        </authorList>
    </citation>
    <scope>NUCLEOTIDE SEQUENCE [LARGE SCALE GENOMIC DNA]</scope>
    <source>
        <strain>DSM 6014 / CCUG 31198 / JCM 15750 / NBRC 105917 / EY 4224 / RW1</strain>
    </source>
</reference>
<sequence length="129" mass="13944">MAREPQRIRRRERKNITAGVAHVNASFNNTMITITDAQGNAIAWSSAGMMGFKGSRKSTPYAAQVAAEDAGKKAAEHGVRTLEVEVKGPGSGRESALRALQAVGFHITSIRDVTPIPHNGVRPSKRRRV</sequence>
<protein>
    <recommendedName>
        <fullName evidence="1">Small ribosomal subunit protein uS11</fullName>
    </recommendedName>
    <alternativeName>
        <fullName evidence="2">30S ribosomal protein S11</fullName>
    </alternativeName>
</protein>
<accession>A5V5X6</accession>
<dbReference type="EMBL" id="CP000699">
    <property type="protein sequence ID" value="ABQ67692.1"/>
    <property type="molecule type" value="Genomic_DNA"/>
</dbReference>
<dbReference type="SMR" id="A5V5X6"/>
<dbReference type="STRING" id="392499.Swit_1327"/>
<dbReference type="PaxDb" id="392499-Swit_1327"/>
<dbReference type="KEGG" id="swi:Swit_1327"/>
<dbReference type="eggNOG" id="COG0100">
    <property type="taxonomic scope" value="Bacteria"/>
</dbReference>
<dbReference type="HOGENOM" id="CLU_072439_5_0_5"/>
<dbReference type="OrthoDB" id="9806415at2"/>
<dbReference type="Proteomes" id="UP000001989">
    <property type="component" value="Chromosome"/>
</dbReference>
<dbReference type="GO" id="GO:1990904">
    <property type="term" value="C:ribonucleoprotein complex"/>
    <property type="evidence" value="ECO:0007669"/>
    <property type="project" value="UniProtKB-KW"/>
</dbReference>
<dbReference type="GO" id="GO:0005840">
    <property type="term" value="C:ribosome"/>
    <property type="evidence" value="ECO:0007669"/>
    <property type="project" value="UniProtKB-KW"/>
</dbReference>
<dbReference type="GO" id="GO:0019843">
    <property type="term" value="F:rRNA binding"/>
    <property type="evidence" value="ECO:0007669"/>
    <property type="project" value="UniProtKB-UniRule"/>
</dbReference>
<dbReference type="GO" id="GO:0003735">
    <property type="term" value="F:structural constituent of ribosome"/>
    <property type="evidence" value="ECO:0007669"/>
    <property type="project" value="InterPro"/>
</dbReference>
<dbReference type="GO" id="GO:0006412">
    <property type="term" value="P:translation"/>
    <property type="evidence" value="ECO:0007669"/>
    <property type="project" value="UniProtKB-UniRule"/>
</dbReference>
<dbReference type="FunFam" id="3.30.420.80:FF:000001">
    <property type="entry name" value="30S ribosomal protein S11"/>
    <property type="match status" value="1"/>
</dbReference>
<dbReference type="Gene3D" id="3.30.420.80">
    <property type="entry name" value="Ribosomal protein S11"/>
    <property type="match status" value="1"/>
</dbReference>
<dbReference type="HAMAP" id="MF_01310">
    <property type="entry name" value="Ribosomal_uS11"/>
    <property type="match status" value="1"/>
</dbReference>
<dbReference type="InterPro" id="IPR001971">
    <property type="entry name" value="Ribosomal_uS11"/>
</dbReference>
<dbReference type="InterPro" id="IPR019981">
    <property type="entry name" value="Ribosomal_uS11_bac-type"/>
</dbReference>
<dbReference type="InterPro" id="IPR018102">
    <property type="entry name" value="Ribosomal_uS11_CS"/>
</dbReference>
<dbReference type="InterPro" id="IPR036967">
    <property type="entry name" value="Ribosomal_uS11_sf"/>
</dbReference>
<dbReference type="NCBIfam" id="NF003698">
    <property type="entry name" value="PRK05309.1"/>
    <property type="match status" value="1"/>
</dbReference>
<dbReference type="NCBIfam" id="TIGR03632">
    <property type="entry name" value="uS11_bact"/>
    <property type="match status" value="1"/>
</dbReference>
<dbReference type="PANTHER" id="PTHR11759">
    <property type="entry name" value="40S RIBOSOMAL PROTEIN S14/30S RIBOSOMAL PROTEIN S11"/>
    <property type="match status" value="1"/>
</dbReference>
<dbReference type="Pfam" id="PF00411">
    <property type="entry name" value="Ribosomal_S11"/>
    <property type="match status" value="1"/>
</dbReference>
<dbReference type="PIRSF" id="PIRSF002131">
    <property type="entry name" value="Ribosomal_S11"/>
    <property type="match status" value="1"/>
</dbReference>
<dbReference type="SUPFAM" id="SSF53137">
    <property type="entry name" value="Translational machinery components"/>
    <property type="match status" value="1"/>
</dbReference>
<dbReference type="PROSITE" id="PS00054">
    <property type="entry name" value="RIBOSOMAL_S11"/>
    <property type="match status" value="1"/>
</dbReference>